<sequence length="874" mass="97614">MLKKFDKKDEESGGGSNPLQHLEKSAVLQEARVFNETPINPRKCAHILTKILYLINQGEHLGTTEATEAFFAMTKLFQSNDPTLRRMCYLTIKEMSCIAEDVIIVTSSLTKDMTGKEDNYRGPAVRALCQITDSTMLQAVERYMKQAIVDKVPSVSSSALVSSLHLLKCSFDVVKRWVNEAQEAASSDNIMVQYHALGLLYHVRKNDRLAVSKMISKFTRHGLKSPFAYCMMIRVASKQLEEEDGSRDSPLFDFIESCLRNKHEMVVYEAASAIVNLPGCSAKELAPAVSVLQLFCSSPKAALRYAAVRTLNKVAMKHPSAVTACNLDLENLVTDSNRSIATLAITTLLKTGSESSIDRLMKQISSFMSEISDEFKVVVVQAISALCQKYPRKHAVLMNFLFTMLREEGGFEYKRAIVDCIISIIEENSESKETGLSHLCEFIEDCEFTVLATRILHLLGQEGPKTNNPSKYIRFIYNRVVLEHEEVRAGAVSALAKFGAQNEEMLPSILVLLKRCVMDDDNEVRDRATFYLNVLEQKQKALNAGYILNGLTVSIPGLEKALQQYTLEPSEKPFDLKSVPLATTPMTEQRPESTSTAAVKQPEKVAATRQEIFQEQLAAVPEFQGLGPLFKSSPEPVALTESETEYVIRCTKHTFSDHLVFQFDCTNTLNDQTLENVTVQMEPTEAYEVLSYVPVRSLPYNQPGTCYTLVALPKEDPTAVACTFSCVMKFTVKDCDPNTGEIDEEGYEDEYVLEDLEVTVADHIQKVMKVNFEAAWDEVGDEFEKEETFTLSTIKTLEEAVGNIVKFLGMHPCERSDKVPENKNTHTLLLAGVFRGGHDILVRSRLLLLDTVTMQVTARSSEELPVDIILASVG</sequence>
<reference key="1">
    <citation type="journal article" date="2005" name="Genomics">
        <title>Fine mapping of radiation susceptibility and gene expression analysis of LEC congenic rat lines.</title>
        <authorList>
            <person name="Tsuji A.B."/>
            <person name="Sugyo A."/>
            <person name="Ogiu T."/>
            <person name="Sagara M."/>
            <person name="Kimura T."/>
            <person name="Ishikawa A."/>
            <person name="Sudo H."/>
            <person name="Ohtsuki M."/>
            <person name="Aburatani H."/>
            <person name="Imai T."/>
            <person name="Harada Y.N."/>
        </authorList>
    </citation>
    <scope>NUCLEOTIDE SEQUENCE [MRNA]</scope>
    <source>
        <strain>Fischer 344/DuCrj</strain>
        <strain>LEC/Crj</strain>
    </source>
</reference>
<reference key="2">
    <citation type="journal article" date="2004" name="Genome Res.">
        <title>The status, quality, and expansion of the NIH full-length cDNA project: the Mammalian Gene Collection (MGC).</title>
        <authorList>
            <consortium name="The MGC Project Team"/>
        </authorList>
    </citation>
    <scope>NUCLEOTIDE SEQUENCE [LARGE SCALE MRNA]</scope>
    <source>
        <tissue>Kidney</tissue>
    </source>
</reference>
<reference key="3">
    <citation type="journal article" date="2007" name="Proc. Natl. Acad. Sci. U.S.A.">
        <title>Differential localization of coatomer complex isoforms within the Golgi apparatus.</title>
        <authorList>
            <person name="Moelleken J."/>
            <person name="Malsam J."/>
            <person name="Betts M.J."/>
            <person name="Movafeghi A."/>
            <person name="Reckmann I."/>
            <person name="Meissner I."/>
            <person name="Hellwig A."/>
            <person name="Russell R.B."/>
            <person name="Sollner T."/>
            <person name="Brugger B."/>
            <person name="Wieland F.T."/>
        </authorList>
    </citation>
    <scope>SUBCELLULAR LOCATION</scope>
</reference>
<proteinExistence type="evidence at transcript level"/>
<evidence type="ECO:0000250" key="1"/>
<evidence type="ECO:0000250" key="2">
    <source>
        <dbReference type="UniProtKB" id="Q9Y678"/>
    </source>
</evidence>
<evidence type="ECO:0000256" key="3">
    <source>
        <dbReference type="SAM" id="MobiDB-lite"/>
    </source>
</evidence>
<evidence type="ECO:0000269" key="4">
    <source>
    </source>
</evidence>
<evidence type="ECO:0000305" key="5"/>
<gene>
    <name type="primary">Copg1</name>
    <name type="synonym">Copg</name>
</gene>
<protein>
    <recommendedName>
        <fullName>Coatomer subunit gamma-1</fullName>
    </recommendedName>
    <alternativeName>
        <fullName>Gamma-1-coat protein</fullName>
        <shortName>Gamma-1-COP</shortName>
    </alternativeName>
</protein>
<comment type="function">
    <text evidence="1">The coatomer is a cytosolic protein complex that binds to dilysine motifs and reversibly associates with Golgi non-clathrin-coated vesicles, which further mediate biosynthetic protein transport from the ER, via the Golgi up to the trans Golgi network. Coatomer complex is required for budding from Golgi membranes, and is essential for the retrograde Golgi-to-ER transport of dilysine-tagged proteins. In mammals, the coatomer can only be recruited by membranes associated to ADP-ribosylation factors (ARFs), which are small GTP-binding proteins; the complex also influences the Golgi structural integrity, as well as the processing, activity, and endocytic recycling of LDL receptors. Required for limiting lipid storage in lipid droplets. Involved in lipid homeostasis by regulating the presence of perilipin family members PLIN2 and PLIN3 at the lipid droplet surface and promoting the association of adipocyte triglyceride lipase (PNPLA2) with the lipid droplet surface to mediate lipolysis (By similarity).</text>
</comment>
<comment type="subunit">
    <text evidence="2">Oligomeric complex that consists of at least the alpha, beta, beta', gamma, delta, epsilon and zeta subunits. Interacts with ZNF289/ARFGAP2 through its C-terminal appendage domain (By similarity). Interacts with EGFR upon EGF treatment; interaction is essential for regulation of EGF-dependent nuclear transport of EGFR by retrograde trafficking from the Golgi to the ER (By similarity). The coatomer interacts with KDEL receptors; the interaction is important for retrograde trafficking of KDEL-bearing proteins from the Golgi to the endoplasmic reticulum (By similarity). Interacts with COPB1 (By similarity). Interacts with TMED10 (via C-terminus). Interacts with TMED2, TMED3, TMED7 and TMED9 (By similarity).</text>
</comment>
<comment type="subcellular location">
    <subcellularLocation>
        <location evidence="1">Cytoplasm</location>
        <location evidence="1">Cytosol</location>
    </subcellularLocation>
    <subcellularLocation>
        <location evidence="1">Golgi apparatus membrane</location>
        <topology evidence="1">Peripheral membrane protein</topology>
        <orientation evidence="1">Cytoplasmic side</orientation>
    </subcellularLocation>
    <subcellularLocation>
        <location evidence="1">Cytoplasmic vesicle</location>
        <location evidence="1">COPI-coated vesicle membrane</location>
        <topology evidence="1">Peripheral membrane protein</topology>
        <orientation evidence="1">Cytoplasmic side</orientation>
    </subcellularLocation>
    <text evidence="1 4">The coatomer is cytoplasmic or polymerized on the cytoplasmic side of the Golgi, as well as on the vesicles/buds originating from it (By similarity). About 70% of the COPG1-containing coatomers are found in the cis-Golgi apparatus.</text>
</comment>
<comment type="similarity">
    <text evidence="5">Belongs to the COPG family.</text>
</comment>
<dbReference type="EMBL" id="AB158425">
    <property type="protein sequence ID" value="BAE16997.1"/>
    <property type="molecule type" value="mRNA"/>
</dbReference>
<dbReference type="EMBL" id="AB158426">
    <property type="protein sequence ID" value="BAE16998.1"/>
    <property type="molecule type" value="mRNA"/>
</dbReference>
<dbReference type="EMBL" id="BC129074">
    <property type="protein sequence ID" value="AAI29075.1"/>
    <property type="molecule type" value="mRNA"/>
</dbReference>
<dbReference type="RefSeq" id="NP_001026992.1">
    <property type="nucleotide sequence ID" value="NM_001031822.4"/>
</dbReference>
<dbReference type="SMR" id="Q4AEF8"/>
<dbReference type="BioGRID" id="255579">
    <property type="interactions" value="3"/>
</dbReference>
<dbReference type="FunCoup" id="Q4AEF8">
    <property type="interactions" value="3726"/>
</dbReference>
<dbReference type="IntAct" id="Q4AEF8">
    <property type="interactions" value="4"/>
</dbReference>
<dbReference type="MINT" id="Q4AEF8"/>
<dbReference type="STRING" id="10116.ENSRNOP00000071817"/>
<dbReference type="iPTMnet" id="Q4AEF8"/>
<dbReference type="PhosphoSitePlus" id="Q4AEF8"/>
<dbReference type="SwissPalm" id="Q4AEF8"/>
<dbReference type="jPOST" id="Q4AEF8"/>
<dbReference type="PaxDb" id="10116-ENSRNOP00000016137"/>
<dbReference type="GeneID" id="297428"/>
<dbReference type="KEGG" id="rno:297428"/>
<dbReference type="AGR" id="RGD:1565292"/>
<dbReference type="CTD" id="22820"/>
<dbReference type="RGD" id="1565292">
    <property type="gene designation" value="Copg1"/>
</dbReference>
<dbReference type="VEuPathDB" id="HostDB:ENSRNOG00000010474"/>
<dbReference type="eggNOG" id="KOG1078">
    <property type="taxonomic scope" value="Eukaryota"/>
</dbReference>
<dbReference type="HOGENOM" id="CLU_010353_2_0_1"/>
<dbReference type="InParanoid" id="Q4AEF8"/>
<dbReference type="OrthoDB" id="39381at9989"/>
<dbReference type="PhylomeDB" id="Q4AEF8"/>
<dbReference type="TreeFam" id="TF300324"/>
<dbReference type="Reactome" id="R-RNO-6807878">
    <property type="pathway name" value="COPI-mediated anterograde transport"/>
</dbReference>
<dbReference type="Reactome" id="R-RNO-6811434">
    <property type="pathway name" value="COPI-dependent Golgi-to-ER retrograde traffic"/>
</dbReference>
<dbReference type="PRO" id="PR:Q4AEF8"/>
<dbReference type="Proteomes" id="UP000002494">
    <property type="component" value="Chromosome 4"/>
</dbReference>
<dbReference type="Bgee" id="ENSRNOG00000010474">
    <property type="expression patterns" value="Expressed in cerebellum and 19 other cell types or tissues"/>
</dbReference>
<dbReference type="ExpressionAtlas" id="Q4AEF8">
    <property type="expression patterns" value="baseline and differential"/>
</dbReference>
<dbReference type="GO" id="GO:0030126">
    <property type="term" value="C:COPI vesicle coat"/>
    <property type="evidence" value="ECO:0000318"/>
    <property type="project" value="GO_Central"/>
</dbReference>
<dbReference type="GO" id="GO:0005829">
    <property type="term" value="C:cytosol"/>
    <property type="evidence" value="ECO:0007669"/>
    <property type="project" value="UniProtKB-SubCell"/>
</dbReference>
<dbReference type="GO" id="GO:0005783">
    <property type="term" value="C:endoplasmic reticulum"/>
    <property type="evidence" value="ECO:0000318"/>
    <property type="project" value="GO_Central"/>
</dbReference>
<dbReference type="GO" id="GO:0005793">
    <property type="term" value="C:endoplasmic reticulum-Golgi intermediate compartment"/>
    <property type="evidence" value="ECO:0000318"/>
    <property type="project" value="GO_Central"/>
</dbReference>
<dbReference type="GO" id="GO:0000139">
    <property type="term" value="C:Golgi membrane"/>
    <property type="evidence" value="ECO:0000314"/>
    <property type="project" value="BHF-UCL"/>
</dbReference>
<dbReference type="GO" id="GO:0005198">
    <property type="term" value="F:structural molecule activity"/>
    <property type="evidence" value="ECO:0007669"/>
    <property type="project" value="InterPro"/>
</dbReference>
<dbReference type="GO" id="GO:0006888">
    <property type="term" value="P:endoplasmic reticulum to Golgi vesicle-mediated transport"/>
    <property type="evidence" value="ECO:0000318"/>
    <property type="project" value="GO_Central"/>
</dbReference>
<dbReference type="GO" id="GO:0051683">
    <property type="term" value="P:establishment of Golgi localization"/>
    <property type="evidence" value="ECO:0000315"/>
    <property type="project" value="BHF-UCL"/>
</dbReference>
<dbReference type="GO" id="GO:0006891">
    <property type="term" value="P:intra-Golgi vesicle-mediated transport"/>
    <property type="evidence" value="ECO:0000318"/>
    <property type="project" value="GO_Central"/>
</dbReference>
<dbReference type="GO" id="GO:0006886">
    <property type="term" value="P:intracellular protein transport"/>
    <property type="evidence" value="ECO:0007669"/>
    <property type="project" value="InterPro"/>
</dbReference>
<dbReference type="GO" id="GO:0072384">
    <property type="term" value="P:organelle transport along microtubule"/>
    <property type="evidence" value="ECO:0000315"/>
    <property type="project" value="BHF-UCL"/>
</dbReference>
<dbReference type="GO" id="GO:0009306">
    <property type="term" value="P:protein secretion"/>
    <property type="evidence" value="ECO:0000318"/>
    <property type="project" value="GO_Central"/>
</dbReference>
<dbReference type="FunFam" id="1.25.10.10:FF:000038">
    <property type="entry name" value="Coatomer subunit gamma"/>
    <property type="match status" value="1"/>
</dbReference>
<dbReference type="FunFam" id="2.60.40.1480:FF:000001">
    <property type="entry name" value="Coatomer subunit gamma"/>
    <property type="match status" value="1"/>
</dbReference>
<dbReference type="FunFam" id="3.30.310.10:FF:000006">
    <property type="entry name" value="Coatomer subunit gamma"/>
    <property type="match status" value="1"/>
</dbReference>
<dbReference type="FunFam" id="1.25.10.10:FF:001568">
    <property type="entry name" value="Uncharacterized protein"/>
    <property type="match status" value="1"/>
</dbReference>
<dbReference type="Gene3D" id="2.60.40.1480">
    <property type="entry name" value="Coatomer, gamma subunit, appendage domain"/>
    <property type="match status" value="1"/>
</dbReference>
<dbReference type="Gene3D" id="1.25.10.10">
    <property type="entry name" value="Leucine-rich Repeat Variant"/>
    <property type="match status" value="2"/>
</dbReference>
<dbReference type="Gene3D" id="3.30.310.10">
    <property type="entry name" value="TATA-Binding Protein"/>
    <property type="match status" value="1"/>
</dbReference>
<dbReference type="InterPro" id="IPR011989">
    <property type="entry name" value="ARM-like"/>
</dbReference>
<dbReference type="InterPro" id="IPR016024">
    <property type="entry name" value="ARM-type_fold"/>
</dbReference>
<dbReference type="InterPro" id="IPR002553">
    <property type="entry name" value="Clathrin/coatomer_adapt-like_N"/>
</dbReference>
<dbReference type="InterPro" id="IPR013041">
    <property type="entry name" value="Clathrin_app_Ig-like_sf"/>
</dbReference>
<dbReference type="InterPro" id="IPR009028">
    <property type="entry name" value="Coatomer/calthrin_app_sub_C"/>
</dbReference>
<dbReference type="InterPro" id="IPR032154">
    <property type="entry name" value="Coatomer_g_Cpla"/>
</dbReference>
<dbReference type="InterPro" id="IPR017106">
    <property type="entry name" value="Coatomer_gsu"/>
</dbReference>
<dbReference type="InterPro" id="IPR013040">
    <property type="entry name" value="Coatomer_gsu_app_Ig-like_dom"/>
</dbReference>
<dbReference type="InterPro" id="IPR037067">
    <property type="entry name" value="Coatomer_gsu_app_sf"/>
</dbReference>
<dbReference type="InterPro" id="IPR012295">
    <property type="entry name" value="TBP_dom_sf"/>
</dbReference>
<dbReference type="PANTHER" id="PTHR10261">
    <property type="entry name" value="COATOMER SUBUNIT GAMMA"/>
    <property type="match status" value="1"/>
</dbReference>
<dbReference type="PANTHER" id="PTHR10261:SF3">
    <property type="entry name" value="COATOMER SUBUNIT GAMMA-1"/>
    <property type="match status" value="1"/>
</dbReference>
<dbReference type="Pfam" id="PF01602">
    <property type="entry name" value="Adaptin_N"/>
    <property type="match status" value="1"/>
</dbReference>
<dbReference type="Pfam" id="PF16381">
    <property type="entry name" value="Coatomer_g_Cpla"/>
    <property type="match status" value="1"/>
</dbReference>
<dbReference type="Pfam" id="PF08752">
    <property type="entry name" value="COP-gamma_platf"/>
    <property type="match status" value="1"/>
</dbReference>
<dbReference type="PIRSF" id="PIRSF037093">
    <property type="entry name" value="Coatomer_gamma_subunit"/>
    <property type="match status" value="1"/>
</dbReference>
<dbReference type="SUPFAM" id="SSF48371">
    <property type="entry name" value="ARM repeat"/>
    <property type="match status" value="1"/>
</dbReference>
<dbReference type="SUPFAM" id="SSF49348">
    <property type="entry name" value="Clathrin adaptor appendage domain"/>
    <property type="match status" value="1"/>
</dbReference>
<dbReference type="SUPFAM" id="SSF55711">
    <property type="entry name" value="Subdomain of clathrin and coatomer appendage domain"/>
    <property type="match status" value="1"/>
</dbReference>
<feature type="chain" id="PRO_0000304940" description="Coatomer subunit gamma-1">
    <location>
        <begin position="1"/>
        <end position="874"/>
    </location>
</feature>
<feature type="repeat" description="HEAT 1">
    <location>
        <begin position="64"/>
        <end position="101"/>
    </location>
</feature>
<feature type="repeat" description="HEAT 2">
    <location>
        <begin position="283"/>
        <end position="320"/>
    </location>
</feature>
<feature type="repeat" description="HEAT 3">
    <location>
        <begin position="322"/>
        <end position="355"/>
    </location>
</feature>
<feature type="repeat" description="HEAT 4">
    <location>
        <begin position="356"/>
        <end position="392"/>
    </location>
</feature>
<feature type="region of interest" description="Disordered" evidence="3">
    <location>
        <begin position="1"/>
        <end position="21"/>
    </location>
</feature>
<feature type="region of interest" description="Interaction with ZNF289/ARFGAP2" evidence="1">
    <location>
        <begin position="609"/>
        <end position="874"/>
    </location>
</feature>
<feature type="compositionally biased region" description="Basic and acidic residues" evidence="3">
    <location>
        <begin position="1"/>
        <end position="11"/>
    </location>
</feature>
<feature type="modified residue" description="Phosphothreonine" evidence="2">
    <location>
        <position position="594"/>
    </location>
</feature>
<organism>
    <name type="scientific">Rattus norvegicus</name>
    <name type="common">Rat</name>
    <dbReference type="NCBI Taxonomy" id="10116"/>
    <lineage>
        <taxon>Eukaryota</taxon>
        <taxon>Metazoa</taxon>
        <taxon>Chordata</taxon>
        <taxon>Craniata</taxon>
        <taxon>Vertebrata</taxon>
        <taxon>Euteleostomi</taxon>
        <taxon>Mammalia</taxon>
        <taxon>Eutheria</taxon>
        <taxon>Euarchontoglires</taxon>
        <taxon>Glires</taxon>
        <taxon>Rodentia</taxon>
        <taxon>Myomorpha</taxon>
        <taxon>Muroidea</taxon>
        <taxon>Muridae</taxon>
        <taxon>Murinae</taxon>
        <taxon>Rattus</taxon>
    </lineage>
</organism>
<keyword id="KW-0963">Cytoplasm</keyword>
<keyword id="KW-0968">Cytoplasmic vesicle</keyword>
<keyword id="KW-0931">ER-Golgi transport</keyword>
<keyword id="KW-0333">Golgi apparatus</keyword>
<keyword id="KW-0472">Membrane</keyword>
<keyword id="KW-0597">Phosphoprotein</keyword>
<keyword id="KW-0653">Protein transport</keyword>
<keyword id="KW-1185">Reference proteome</keyword>
<keyword id="KW-0677">Repeat</keyword>
<keyword id="KW-0813">Transport</keyword>
<name>COPG1_RAT</name>
<accession>Q4AEF8</accession>